<organism>
    <name type="scientific">Rhizobium johnstonii (strain DSM 114642 / LMG 32736 / 3841)</name>
    <name type="common">Rhizobium leguminosarum bv. viciae</name>
    <dbReference type="NCBI Taxonomy" id="216596"/>
    <lineage>
        <taxon>Bacteria</taxon>
        <taxon>Pseudomonadati</taxon>
        <taxon>Pseudomonadota</taxon>
        <taxon>Alphaproteobacteria</taxon>
        <taxon>Hyphomicrobiales</taxon>
        <taxon>Rhizobiaceae</taxon>
        <taxon>Rhizobium/Agrobacterium group</taxon>
        <taxon>Rhizobium</taxon>
        <taxon>Rhizobium johnstonii</taxon>
    </lineage>
</organism>
<keyword id="KW-0963">Cytoplasm</keyword>
<keyword id="KW-0324">Glycolysis</keyword>
<keyword id="KW-0456">Lyase</keyword>
<keyword id="KW-0460">Magnesium</keyword>
<keyword id="KW-0479">Metal-binding</keyword>
<keyword id="KW-0964">Secreted</keyword>
<sequence>MTAITDIIAREILDSRGNPTVEVDVYLEDGSMGRAAVPSGASTGAHEAVELRDGGKRYLGKGVEKAVEAANTEIFDAIGGIDAENQIQIDNIMIELDGTPNKSRLGANAILGVSLAVAKAAAQASGLPLYRYVGGASACLLPVPMMNIINGGAHADNPIDFQEFMILPVGADSIAEAVRMGSEVFHTLRKELAAQGHNTNVGDEGGFAPGLKSAPEALDFIMKSIEKAGYKPGDDMCLGLDCASTEFFKDGKYVLEGEGRTLESGAMAEYLAELAANYPIISIEDGMAEDDWDGWKTLTDLAGKKTQLVGDDLFVTNSARLRDGIRMGVANSILVKVNQIGTLTETLDAVNTAHKAAYTAVMSHRSGETEDSTIADLAVATNCGQIKTGSLSRSDRLAKYNQLIRIEEGLGPQAQYAGRSIIRG</sequence>
<protein>
    <recommendedName>
        <fullName evidence="1">Enolase</fullName>
        <ecNumber evidence="1">4.2.1.11</ecNumber>
    </recommendedName>
    <alternativeName>
        <fullName evidence="1">2-phospho-D-glycerate hydro-lyase</fullName>
    </alternativeName>
    <alternativeName>
        <fullName evidence="1">2-phosphoglycerate dehydratase</fullName>
    </alternativeName>
</protein>
<feature type="chain" id="PRO_0000267087" description="Enolase">
    <location>
        <begin position="1"/>
        <end position="424"/>
    </location>
</feature>
<feature type="active site" description="Proton donor" evidence="1">
    <location>
        <position position="204"/>
    </location>
</feature>
<feature type="active site" description="Proton acceptor" evidence="1">
    <location>
        <position position="336"/>
    </location>
</feature>
<feature type="binding site" evidence="1">
    <location>
        <position position="162"/>
    </location>
    <ligand>
        <name>(2R)-2-phosphoglycerate</name>
        <dbReference type="ChEBI" id="CHEBI:58289"/>
    </ligand>
</feature>
<feature type="binding site" evidence="1">
    <location>
        <position position="241"/>
    </location>
    <ligand>
        <name>Mg(2+)</name>
        <dbReference type="ChEBI" id="CHEBI:18420"/>
    </ligand>
</feature>
<feature type="binding site" evidence="1">
    <location>
        <position position="284"/>
    </location>
    <ligand>
        <name>Mg(2+)</name>
        <dbReference type="ChEBI" id="CHEBI:18420"/>
    </ligand>
</feature>
<feature type="binding site" evidence="1">
    <location>
        <position position="311"/>
    </location>
    <ligand>
        <name>Mg(2+)</name>
        <dbReference type="ChEBI" id="CHEBI:18420"/>
    </ligand>
</feature>
<feature type="binding site" evidence="1">
    <location>
        <position position="336"/>
    </location>
    <ligand>
        <name>(2R)-2-phosphoglycerate</name>
        <dbReference type="ChEBI" id="CHEBI:58289"/>
    </ligand>
</feature>
<feature type="binding site" evidence="1">
    <location>
        <position position="365"/>
    </location>
    <ligand>
        <name>(2R)-2-phosphoglycerate</name>
        <dbReference type="ChEBI" id="CHEBI:58289"/>
    </ligand>
</feature>
<feature type="binding site" evidence="1">
    <location>
        <position position="366"/>
    </location>
    <ligand>
        <name>(2R)-2-phosphoglycerate</name>
        <dbReference type="ChEBI" id="CHEBI:58289"/>
    </ligand>
</feature>
<feature type="binding site" evidence="1">
    <location>
        <position position="387"/>
    </location>
    <ligand>
        <name>(2R)-2-phosphoglycerate</name>
        <dbReference type="ChEBI" id="CHEBI:58289"/>
    </ligand>
</feature>
<comment type="function">
    <text evidence="1">Catalyzes the reversible conversion of 2-phosphoglycerate (2-PG) into phosphoenolpyruvate (PEP). It is essential for the degradation of carbohydrates via glycolysis.</text>
</comment>
<comment type="catalytic activity">
    <reaction evidence="1">
        <text>(2R)-2-phosphoglycerate = phosphoenolpyruvate + H2O</text>
        <dbReference type="Rhea" id="RHEA:10164"/>
        <dbReference type="ChEBI" id="CHEBI:15377"/>
        <dbReference type="ChEBI" id="CHEBI:58289"/>
        <dbReference type="ChEBI" id="CHEBI:58702"/>
        <dbReference type="EC" id="4.2.1.11"/>
    </reaction>
</comment>
<comment type="cofactor">
    <cofactor evidence="1">
        <name>Mg(2+)</name>
        <dbReference type="ChEBI" id="CHEBI:18420"/>
    </cofactor>
    <text evidence="1">Binds a second Mg(2+) ion via substrate during catalysis.</text>
</comment>
<comment type="pathway">
    <text evidence="1">Carbohydrate degradation; glycolysis; pyruvate from D-glyceraldehyde 3-phosphate: step 4/5.</text>
</comment>
<comment type="subcellular location">
    <subcellularLocation>
        <location evidence="1">Cytoplasm</location>
    </subcellularLocation>
    <subcellularLocation>
        <location evidence="1">Secreted</location>
    </subcellularLocation>
    <subcellularLocation>
        <location evidence="1">Cell surface</location>
    </subcellularLocation>
    <text evidence="1">Fractions of enolase are present in both the cytoplasm and on the cell surface.</text>
</comment>
<comment type="similarity">
    <text evidence="1">Belongs to the enolase family.</text>
</comment>
<accession>Q1MH36</accession>
<gene>
    <name evidence="1" type="primary">eno</name>
    <name type="ordered locus">RL2239</name>
</gene>
<name>ENO_RHIJ3</name>
<evidence type="ECO:0000255" key="1">
    <source>
        <dbReference type="HAMAP-Rule" id="MF_00318"/>
    </source>
</evidence>
<dbReference type="EC" id="4.2.1.11" evidence="1"/>
<dbReference type="EMBL" id="AM236080">
    <property type="protein sequence ID" value="CAK07731.1"/>
    <property type="molecule type" value="Genomic_DNA"/>
</dbReference>
<dbReference type="RefSeq" id="WP_011651829.1">
    <property type="nucleotide sequence ID" value="NC_008380.1"/>
</dbReference>
<dbReference type="SMR" id="Q1MH36"/>
<dbReference type="EnsemblBacteria" id="CAK07731">
    <property type="protein sequence ID" value="CAK07731"/>
    <property type="gene ID" value="RL2239"/>
</dbReference>
<dbReference type="KEGG" id="rle:RL2239"/>
<dbReference type="eggNOG" id="COG0148">
    <property type="taxonomic scope" value="Bacteria"/>
</dbReference>
<dbReference type="HOGENOM" id="CLU_031223_2_1_5"/>
<dbReference type="UniPathway" id="UPA00109">
    <property type="reaction ID" value="UER00187"/>
</dbReference>
<dbReference type="Proteomes" id="UP000006575">
    <property type="component" value="Chromosome"/>
</dbReference>
<dbReference type="GO" id="GO:0009986">
    <property type="term" value="C:cell surface"/>
    <property type="evidence" value="ECO:0007669"/>
    <property type="project" value="UniProtKB-SubCell"/>
</dbReference>
<dbReference type="GO" id="GO:0005576">
    <property type="term" value="C:extracellular region"/>
    <property type="evidence" value="ECO:0007669"/>
    <property type="project" value="UniProtKB-SubCell"/>
</dbReference>
<dbReference type="GO" id="GO:0000015">
    <property type="term" value="C:phosphopyruvate hydratase complex"/>
    <property type="evidence" value="ECO:0007669"/>
    <property type="project" value="InterPro"/>
</dbReference>
<dbReference type="GO" id="GO:0000287">
    <property type="term" value="F:magnesium ion binding"/>
    <property type="evidence" value="ECO:0007669"/>
    <property type="project" value="UniProtKB-UniRule"/>
</dbReference>
<dbReference type="GO" id="GO:0004634">
    <property type="term" value="F:phosphopyruvate hydratase activity"/>
    <property type="evidence" value="ECO:0007669"/>
    <property type="project" value="UniProtKB-UniRule"/>
</dbReference>
<dbReference type="GO" id="GO:0006096">
    <property type="term" value="P:glycolytic process"/>
    <property type="evidence" value="ECO:0007669"/>
    <property type="project" value="UniProtKB-UniRule"/>
</dbReference>
<dbReference type="CDD" id="cd03313">
    <property type="entry name" value="enolase"/>
    <property type="match status" value="1"/>
</dbReference>
<dbReference type="FunFam" id="3.20.20.120:FF:000001">
    <property type="entry name" value="Enolase"/>
    <property type="match status" value="1"/>
</dbReference>
<dbReference type="FunFam" id="3.30.390.10:FF:000001">
    <property type="entry name" value="Enolase"/>
    <property type="match status" value="1"/>
</dbReference>
<dbReference type="Gene3D" id="3.20.20.120">
    <property type="entry name" value="Enolase-like C-terminal domain"/>
    <property type="match status" value="1"/>
</dbReference>
<dbReference type="Gene3D" id="3.30.390.10">
    <property type="entry name" value="Enolase-like, N-terminal domain"/>
    <property type="match status" value="1"/>
</dbReference>
<dbReference type="HAMAP" id="MF_00318">
    <property type="entry name" value="Enolase"/>
    <property type="match status" value="1"/>
</dbReference>
<dbReference type="InterPro" id="IPR000941">
    <property type="entry name" value="Enolase"/>
</dbReference>
<dbReference type="InterPro" id="IPR036849">
    <property type="entry name" value="Enolase-like_C_sf"/>
</dbReference>
<dbReference type="InterPro" id="IPR029017">
    <property type="entry name" value="Enolase-like_N"/>
</dbReference>
<dbReference type="InterPro" id="IPR020810">
    <property type="entry name" value="Enolase_C"/>
</dbReference>
<dbReference type="InterPro" id="IPR020809">
    <property type="entry name" value="Enolase_CS"/>
</dbReference>
<dbReference type="InterPro" id="IPR020811">
    <property type="entry name" value="Enolase_N"/>
</dbReference>
<dbReference type="NCBIfam" id="TIGR01060">
    <property type="entry name" value="eno"/>
    <property type="match status" value="1"/>
</dbReference>
<dbReference type="PANTHER" id="PTHR11902">
    <property type="entry name" value="ENOLASE"/>
    <property type="match status" value="1"/>
</dbReference>
<dbReference type="PANTHER" id="PTHR11902:SF1">
    <property type="entry name" value="ENOLASE"/>
    <property type="match status" value="1"/>
</dbReference>
<dbReference type="Pfam" id="PF00113">
    <property type="entry name" value="Enolase_C"/>
    <property type="match status" value="1"/>
</dbReference>
<dbReference type="Pfam" id="PF03952">
    <property type="entry name" value="Enolase_N"/>
    <property type="match status" value="1"/>
</dbReference>
<dbReference type="PIRSF" id="PIRSF001400">
    <property type="entry name" value="Enolase"/>
    <property type="match status" value="1"/>
</dbReference>
<dbReference type="PRINTS" id="PR00148">
    <property type="entry name" value="ENOLASE"/>
</dbReference>
<dbReference type="SFLD" id="SFLDS00001">
    <property type="entry name" value="Enolase"/>
    <property type="match status" value="1"/>
</dbReference>
<dbReference type="SFLD" id="SFLDF00002">
    <property type="entry name" value="enolase"/>
    <property type="match status" value="1"/>
</dbReference>
<dbReference type="SMART" id="SM01192">
    <property type="entry name" value="Enolase_C"/>
    <property type="match status" value="1"/>
</dbReference>
<dbReference type="SMART" id="SM01193">
    <property type="entry name" value="Enolase_N"/>
    <property type="match status" value="1"/>
</dbReference>
<dbReference type="SUPFAM" id="SSF51604">
    <property type="entry name" value="Enolase C-terminal domain-like"/>
    <property type="match status" value="1"/>
</dbReference>
<dbReference type="SUPFAM" id="SSF54826">
    <property type="entry name" value="Enolase N-terminal domain-like"/>
    <property type="match status" value="1"/>
</dbReference>
<dbReference type="PROSITE" id="PS00164">
    <property type="entry name" value="ENOLASE"/>
    <property type="match status" value="1"/>
</dbReference>
<reference key="1">
    <citation type="journal article" date="2006" name="Genome Biol.">
        <title>The genome of Rhizobium leguminosarum has recognizable core and accessory components.</title>
        <authorList>
            <person name="Young J.P.W."/>
            <person name="Crossman L.C."/>
            <person name="Johnston A.W.B."/>
            <person name="Thomson N.R."/>
            <person name="Ghazoui Z.F."/>
            <person name="Hull K.H."/>
            <person name="Wexler M."/>
            <person name="Curson A.R.J."/>
            <person name="Todd J.D."/>
            <person name="Poole P.S."/>
            <person name="Mauchline T.H."/>
            <person name="East A.K."/>
            <person name="Quail M.A."/>
            <person name="Churcher C."/>
            <person name="Arrowsmith C."/>
            <person name="Cherevach I."/>
            <person name="Chillingworth T."/>
            <person name="Clarke K."/>
            <person name="Cronin A."/>
            <person name="Davis P."/>
            <person name="Fraser A."/>
            <person name="Hance Z."/>
            <person name="Hauser H."/>
            <person name="Jagels K."/>
            <person name="Moule S."/>
            <person name="Mungall K."/>
            <person name="Norbertczak H."/>
            <person name="Rabbinowitsch E."/>
            <person name="Sanders M."/>
            <person name="Simmonds M."/>
            <person name="Whitehead S."/>
            <person name="Parkhill J."/>
        </authorList>
    </citation>
    <scope>NUCLEOTIDE SEQUENCE [LARGE SCALE GENOMIC DNA]</scope>
    <source>
        <strain>DSM 114642 / LMG 32736 / 3841</strain>
    </source>
</reference>
<proteinExistence type="inferred from homology"/>